<proteinExistence type="inferred from homology"/>
<keyword id="KW-0067">ATP-binding</keyword>
<keyword id="KW-0963">Cytoplasm</keyword>
<keyword id="KW-0418">Kinase</keyword>
<keyword id="KW-0547">Nucleotide-binding</keyword>
<keyword id="KW-1185">Reference proteome</keyword>
<keyword id="KW-0808">Transferase</keyword>
<comment type="function">
    <text evidence="1">Essential for recycling GMP and indirectly, cGMP.</text>
</comment>
<comment type="catalytic activity">
    <reaction evidence="1">
        <text>GMP + ATP = GDP + ADP</text>
        <dbReference type="Rhea" id="RHEA:20780"/>
        <dbReference type="ChEBI" id="CHEBI:30616"/>
        <dbReference type="ChEBI" id="CHEBI:58115"/>
        <dbReference type="ChEBI" id="CHEBI:58189"/>
        <dbReference type="ChEBI" id="CHEBI:456216"/>
        <dbReference type="EC" id="2.7.4.8"/>
    </reaction>
</comment>
<comment type="subcellular location">
    <subcellularLocation>
        <location evidence="1">Cytoplasm</location>
    </subcellularLocation>
</comment>
<comment type="similarity">
    <text evidence="1">Belongs to the guanylate kinase family.</text>
</comment>
<dbReference type="EC" id="2.7.4.8" evidence="1"/>
<dbReference type="EMBL" id="AE009442">
    <property type="protein sequence ID" value="AAO28589.1"/>
    <property type="molecule type" value="Genomic_DNA"/>
</dbReference>
<dbReference type="RefSeq" id="WP_004089000.1">
    <property type="nucleotide sequence ID" value="NC_004556.1"/>
</dbReference>
<dbReference type="SMR" id="Q87DG5"/>
<dbReference type="GeneID" id="93904500"/>
<dbReference type="KEGG" id="xft:PD_0720"/>
<dbReference type="HOGENOM" id="CLU_001715_1_0_6"/>
<dbReference type="Proteomes" id="UP000002516">
    <property type="component" value="Chromosome"/>
</dbReference>
<dbReference type="GO" id="GO:0005829">
    <property type="term" value="C:cytosol"/>
    <property type="evidence" value="ECO:0007669"/>
    <property type="project" value="TreeGrafter"/>
</dbReference>
<dbReference type="GO" id="GO:0005524">
    <property type="term" value="F:ATP binding"/>
    <property type="evidence" value="ECO:0007669"/>
    <property type="project" value="UniProtKB-UniRule"/>
</dbReference>
<dbReference type="GO" id="GO:0004385">
    <property type="term" value="F:guanylate kinase activity"/>
    <property type="evidence" value="ECO:0007669"/>
    <property type="project" value="UniProtKB-UniRule"/>
</dbReference>
<dbReference type="CDD" id="cd00071">
    <property type="entry name" value="GMPK"/>
    <property type="match status" value="1"/>
</dbReference>
<dbReference type="FunFam" id="3.30.63.10:FF:000005">
    <property type="entry name" value="Guanylate kinase"/>
    <property type="match status" value="1"/>
</dbReference>
<dbReference type="FunFam" id="3.40.50.300:FF:000084">
    <property type="entry name" value="Guanylate kinase"/>
    <property type="match status" value="1"/>
</dbReference>
<dbReference type="Gene3D" id="3.30.63.10">
    <property type="entry name" value="Guanylate Kinase phosphate binding domain"/>
    <property type="match status" value="1"/>
</dbReference>
<dbReference type="Gene3D" id="3.40.50.300">
    <property type="entry name" value="P-loop containing nucleotide triphosphate hydrolases"/>
    <property type="match status" value="1"/>
</dbReference>
<dbReference type="HAMAP" id="MF_00328">
    <property type="entry name" value="Guanylate_kinase"/>
    <property type="match status" value="1"/>
</dbReference>
<dbReference type="InterPro" id="IPR008145">
    <property type="entry name" value="GK/Ca_channel_bsu"/>
</dbReference>
<dbReference type="InterPro" id="IPR008144">
    <property type="entry name" value="Guanylate_kin-like_dom"/>
</dbReference>
<dbReference type="InterPro" id="IPR017665">
    <property type="entry name" value="Guanylate_kinase"/>
</dbReference>
<dbReference type="InterPro" id="IPR020590">
    <property type="entry name" value="Guanylate_kinase_CS"/>
</dbReference>
<dbReference type="InterPro" id="IPR027417">
    <property type="entry name" value="P-loop_NTPase"/>
</dbReference>
<dbReference type="NCBIfam" id="TIGR03263">
    <property type="entry name" value="guanyl_kin"/>
    <property type="match status" value="1"/>
</dbReference>
<dbReference type="PANTHER" id="PTHR23117:SF13">
    <property type="entry name" value="GUANYLATE KINASE"/>
    <property type="match status" value="1"/>
</dbReference>
<dbReference type="PANTHER" id="PTHR23117">
    <property type="entry name" value="GUANYLATE KINASE-RELATED"/>
    <property type="match status" value="1"/>
</dbReference>
<dbReference type="Pfam" id="PF00625">
    <property type="entry name" value="Guanylate_kin"/>
    <property type="match status" value="1"/>
</dbReference>
<dbReference type="SMART" id="SM00072">
    <property type="entry name" value="GuKc"/>
    <property type="match status" value="1"/>
</dbReference>
<dbReference type="SUPFAM" id="SSF52540">
    <property type="entry name" value="P-loop containing nucleoside triphosphate hydrolases"/>
    <property type="match status" value="1"/>
</dbReference>
<dbReference type="PROSITE" id="PS00856">
    <property type="entry name" value="GUANYLATE_KINASE_1"/>
    <property type="match status" value="1"/>
</dbReference>
<dbReference type="PROSITE" id="PS50052">
    <property type="entry name" value="GUANYLATE_KINASE_2"/>
    <property type="match status" value="1"/>
</dbReference>
<accession>Q87DG5</accession>
<organism>
    <name type="scientific">Xylella fastidiosa (strain Temecula1 / ATCC 700964)</name>
    <dbReference type="NCBI Taxonomy" id="183190"/>
    <lineage>
        <taxon>Bacteria</taxon>
        <taxon>Pseudomonadati</taxon>
        <taxon>Pseudomonadota</taxon>
        <taxon>Gammaproteobacteria</taxon>
        <taxon>Lysobacterales</taxon>
        <taxon>Lysobacteraceae</taxon>
        <taxon>Xylella</taxon>
    </lineage>
</organism>
<sequence length="204" mass="23236">MRGTLYIVSASSGTGKSSIVNATLERDQQIALSISFTSRQPRPNERHAQHYYFVSADEFQRMIEAGDFFEYALVHGDWKGTARQSVEPQLAAGHDVLLEIDWQGARQVRSKIPDAISIFILPPSRAALEERLRKRGQDSEEVIHLRLAAAHEEMAHYDEFDYTIINEHFETAVSEMSAIFTASRLRRQTQKIRHANLIQTLLTP</sequence>
<reference key="1">
    <citation type="journal article" date="2003" name="J. Bacteriol.">
        <title>Comparative analyses of the complete genome sequences of Pierce's disease and citrus variegated chlorosis strains of Xylella fastidiosa.</title>
        <authorList>
            <person name="Van Sluys M.A."/>
            <person name="de Oliveira M.C."/>
            <person name="Monteiro-Vitorello C.B."/>
            <person name="Miyaki C.Y."/>
            <person name="Furlan L.R."/>
            <person name="Camargo L.E.A."/>
            <person name="da Silva A.C.R."/>
            <person name="Moon D.H."/>
            <person name="Takita M.A."/>
            <person name="Lemos E.G.M."/>
            <person name="Machado M.A."/>
            <person name="Ferro M.I.T."/>
            <person name="da Silva F.R."/>
            <person name="Goldman M.H.S."/>
            <person name="Goldman G.H."/>
            <person name="Lemos M.V.F."/>
            <person name="El-Dorry H."/>
            <person name="Tsai S.M."/>
            <person name="Carrer H."/>
            <person name="Carraro D.M."/>
            <person name="de Oliveira R.C."/>
            <person name="Nunes L.R."/>
            <person name="Siqueira W.J."/>
            <person name="Coutinho L.L."/>
            <person name="Kimura E.T."/>
            <person name="Ferro E.S."/>
            <person name="Harakava R."/>
            <person name="Kuramae E.E."/>
            <person name="Marino C.L."/>
            <person name="Giglioti E."/>
            <person name="Abreu I.L."/>
            <person name="Alves L.M.C."/>
            <person name="do Amaral A.M."/>
            <person name="Baia G.S."/>
            <person name="Blanco S.R."/>
            <person name="Brito M.S."/>
            <person name="Cannavan F.S."/>
            <person name="Celestino A.V."/>
            <person name="da Cunha A.F."/>
            <person name="Fenille R.C."/>
            <person name="Ferro J.A."/>
            <person name="Formighieri E.F."/>
            <person name="Kishi L.T."/>
            <person name="Leoni S.G."/>
            <person name="Oliveira A.R."/>
            <person name="Rosa V.E. Jr."/>
            <person name="Sassaki F.T."/>
            <person name="Sena J.A.D."/>
            <person name="de Souza A.A."/>
            <person name="Truffi D."/>
            <person name="Tsukumo F."/>
            <person name="Yanai G.M."/>
            <person name="Zaros L.G."/>
            <person name="Civerolo E.L."/>
            <person name="Simpson A.J.G."/>
            <person name="Almeida N.F. Jr."/>
            <person name="Setubal J.C."/>
            <person name="Kitajima J.P."/>
        </authorList>
    </citation>
    <scope>NUCLEOTIDE SEQUENCE [LARGE SCALE GENOMIC DNA]</scope>
    <source>
        <strain>Temecula1 / ATCC 700964</strain>
    </source>
</reference>
<evidence type="ECO:0000255" key="1">
    <source>
        <dbReference type="HAMAP-Rule" id="MF_00328"/>
    </source>
</evidence>
<feature type="chain" id="PRO_0000170646" description="Guanylate kinase">
    <location>
        <begin position="1"/>
        <end position="204"/>
    </location>
</feature>
<feature type="domain" description="Guanylate kinase-like" evidence="1">
    <location>
        <begin position="3"/>
        <end position="181"/>
    </location>
</feature>
<feature type="binding site" evidence="1">
    <location>
        <begin position="10"/>
        <end position="17"/>
    </location>
    <ligand>
        <name>ATP</name>
        <dbReference type="ChEBI" id="CHEBI:30616"/>
    </ligand>
</feature>
<protein>
    <recommendedName>
        <fullName evidence="1">Guanylate kinase</fullName>
        <ecNumber evidence="1">2.7.4.8</ecNumber>
    </recommendedName>
    <alternativeName>
        <fullName evidence="1">GMP kinase</fullName>
    </alternativeName>
</protein>
<gene>
    <name evidence="1" type="primary">gmk</name>
    <name type="ordered locus">PD_0720</name>
</gene>
<name>KGUA_XYLFT</name>